<gene>
    <name evidence="8" type="primary">ACRBP</name>
</gene>
<sequence>MRKPAAGFLPSLLKVLLLPLAPAAAQDSTQASTPGSPLSPTEYERFFALLTPTWKAETTCRLRATHGCRNPTLVQLDQYENHGLVPDGAVCSNLPYASWFESFCQFTHYRCSNHVYYAKRVLCSQPVSILSPNTLKEIEASAEVSPTTMTSPISPHFTVTERQTFQPWPERLSNNVEELLQSSLSLGGQEQAPEHKQEQGVEHRQEPTQEHKQEEGQKQEEQEEEQEEEGKQEEGQGTKEGREAVSQLQTDSEPKFHSESLSSNPSSFAPRVREVESTPMIMENIQELIRSAQEIDEMNEIYDENSYWRNQNPGSLLQLPHTEALLVLCYSIVENTCIITPTAKAWKYMEEEILGFGKSVCDSLGRRHMSTCALCDFCSLKLEQCHSEASLQRQQCDTSHKTPFVSPLLASQSLSIGNQVGSPESGRFYGLDLYGGLHMDFWCARLATKGCEDVRVSGWLQTEFLSFQDGDFPTKICDTDYIQYPNYCSFKSQQCLMRNRNRKVSRMRCLQNETYSALSPGKSEDVVLRWSQEFSTLTLGQFG</sequence>
<name>ACRBP_HUMAN</name>
<proteinExistence type="evidence at protein level"/>
<dbReference type="EMBL" id="AB051833">
    <property type="protein sequence ID" value="BAB39388.1"/>
    <property type="molecule type" value="mRNA"/>
</dbReference>
<dbReference type="EMBL" id="BC033010">
    <property type="protein sequence ID" value="AAH33010.1"/>
    <property type="molecule type" value="mRNA"/>
</dbReference>
<dbReference type="CCDS" id="CCDS8554.1"/>
<dbReference type="RefSeq" id="NP_115878.2">
    <property type="nucleotide sequence ID" value="NM_032489.2"/>
</dbReference>
<dbReference type="BioGRID" id="124113">
    <property type="interactions" value="23"/>
</dbReference>
<dbReference type="FunCoup" id="Q8NEB7">
    <property type="interactions" value="54"/>
</dbReference>
<dbReference type="IntAct" id="Q8NEB7">
    <property type="interactions" value="18"/>
</dbReference>
<dbReference type="STRING" id="9606.ENSP00000229243"/>
<dbReference type="GlyGen" id="Q8NEB7">
    <property type="glycosylation" value="1 site"/>
</dbReference>
<dbReference type="iPTMnet" id="Q8NEB7"/>
<dbReference type="PhosphoSitePlus" id="Q8NEB7"/>
<dbReference type="BioMuta" id="ACRBP"/>
<dbReference type="DMDM" id="74730232"/>
<dbReference type="jPOST" id="Q8NEB7"/>
<dbReference type="MassIVE" id="Q8NEB7"/>
<dbReference type="PaxDb" id="9606-ENSP00000229243"/>
<dbReference type="PeptideAtlas" id="Q8NEB7"/>
<dbReference type="ProteomicsDB" id="73146"/>
<dbReference type="Antibodypedia" id="48711">
    <property type="antibodies" value="80 antibodies from 21 providers"/>
</dbReference>
<dbReference type="DNASU" id="84519"/>
<dbReference type="Ensembl" id="ENST00000229243.7">
    <property type="protein sequence ID" value="ENSP00000229243.2"/>
    <property type="gene ID" value="ENSG00000111644.8"/>
</dbReference>
<dbReference type="GeneID" id="84519"/>
<dbReference type="KEGG" id="hsa:84519"/>
<dbReference type="MANE-Select" id="ENST00000229243.7">
    <property type="protein sequence ID" value="ENSP00000229243.2"/>
    <property type="RefSeq nucleotide sequence ID" value="NM_032489.3"/>
    <property type="RefSeq protein sequence ID" value="NP_115878.2"/>
</dbReference>
<dbReference type="UCSC" id="uc001qpu.2">
    <property type="organism name" value="human"/>
</dbReference>
<dbReference type="AGR" id="HGNC:17195"/>
<dbReference type="CTD" id="84519"/>
<dbReference type="DisGeNET" id="84519"/>
<dbReference type="GeneCards" id="ACRBP"/>
<dbReference type="HGNC" id="HGNC:17195">
    <property type="gene designation" value="ACRBP"/>
</dbReference>
<dbReference type="HPA" id="ENSG00000111644">
    <property type="expression patterns" value="Tissue enriched (testis)"/>
</dbReference>
<dbReference type="MIM" id="608352">
    <property type="type" value="gene"/>
</dbReference>
<dbReference type="neXtProt" id="NX_Q8NEB7"/>
<dbReference type="OpenTargets" id="ENSG00000111644"/>
<dbReference type="PharmGKB" id="PA24452"/>
<dbReference type="VEuPathDB" id="HostDB:ENSG00000111644"/>
<dbReference type="eggNOG" id="ENOG502R6TS">
    <property type="taxonomic scope" value="Eukaryota"/>
</dbReference>
<dbReference type="GeneTree" id="ENSGT00390000000826"/>
<dbReference type="HOGENOM" id="CLU_534141_0_0_1"/>
<dbReference type="InParanoid" id="Q8NEB7"/>
<dbReference type="OMA" id="YDEEPVW"/>
<dbReference type="OrthoDB" id="9009946at2759"/>
<dbReference type="PAN-GO" id="Q8NEB7">
    <property type="GO annotations" value="1 GO annotation based on evolutionary models"/>
</dbReference>
<dbReference type="PhylomeDB" id="Q8NEB7"/>
<dbReference type="TreeFam" id="TF336597"/>
<dbReference type="PathwayCommons" id="Q8NEB7"/>
<dbReference type="BioGRID-ORCS" id="84519">
    <property type="hits" value="22 hits in 1156 CRISPR screens"/>
</dbReference>
<dbReference type="ChiTaRS" id="ACRBP">
    <property type="organism name" value="human"/>
</dbReference>
<dbReference type="GenomeRNAi" id="84519"/>
<dbReference type="Pharos" id="Q8NEB7">
    <property type="development level" value="Tbio"/>
</dbReference>
<dbReference type="PRO" id="PR:Q8NEB7"/>
<dbReference type="Proteomes" id="UP000005640">
    <property type="component" value="Chromosome 12"/>
</dbReference>
<dbReference type="RNAct" id="Q8NEB7">
    <property type="molecule type" value="protein"/>
</dbReference>
<dbReference type="Bgee" id="ENSG00000111644">
    <property type="expression patterns" value="Expressed in left testis and 118 other cell types or tissues"/>
</dbReference>
<dbReference type="ExpressionAtlas" id="Q8NEB7">
    <property type="expression patterns" value="baseline and differential"/>
</dbReference>
<dbReference type="GO" id="GO:0002080">
    <property type="term" value="C:acrosomal membrane"/>
    <property type="evidence" value="ECO:0000250"/>
    <property type="project" value="UniProtKB"/>
</dbReference>
<dbReference type="GO" id="GO:0001669">
    <property type="term" value="C:acrosomal vesicle"/>
    <property type="evidence" value="ECO:0000250"/>
    <property type="project" value="UniProtKB"/>
</dbReference>
<dbReference type="GO" id="GO:0005576">
    <property type="term" value="C:extracellular region"/>
    <property type="evidence" value="ECO:0000250"/>
    <property type="project" value="UniProtKB"/>
</dbReference>
<dbReference type="GO" id="GO:0005634">
    <property type="term" value="C:nucleus"/>
    <property type="evidence" value="ECO:0007005"/>
    <property type="project" value="UniProtKB"/>
</dbReference>
<dbReference type="GO" id="GO:0001675">
    <property type="term" value="P:acrosome assembly"/>
    <property type="evidence" value="ECO:0000250"/>
    <property type="project" value="UniProtKB"/>
</dbReference>
<dbReference type="GO" id="GO:0009566">
    <property type="term" value="P:fertilization"/>
    <property type="evidence" value="ECO:0000250"/>
    <property type="project" value="UniProtKB"/>
</dbReference>
<dbReference type="GO" id="GO:0007286">
    <property type="term" value="P:spermatid development"/>
    <property type="evidence" value="ECO:0000250"/>
    <property type="project" value="UniProtKB"/>
</dbReference>
<dbReference type="InterPro" id="IPR036058">
    <property type="entry name" value="Kazal_dom_sf"/>
</dbReference>
<dbReference type="InterPro" id="IPR009865">
    <property type="entry name" value="Proacrosin-bd"/>
</dbReference>
<dbReference type="PANTHER" id="PTHR21362">
    <property type="entry name" value="ACROSIN-BINDING PROTEIN"/>
    <property type="match status" value="1"/>
</dbReference>
<dbReference type="PANTHER" id="PTHR21362:SF1">
    <property type="entry name" value="ACROSIN-BINDING PROTEIN"/>
    <property type="match status" value="1"/>
</dbReference>
<dbReference type="Pfam" id="PF07222">
    <property type="entry name" value="PBP_sp32"/>
    <property type="match status" value="1"/>
</dbReference>
<dbReference type="SUPFAM" id="SSF100895">
    <property type="entry name" value="Kazal-type serine protease inhibitors"/>
    <property type="match status" value="1"/>
</dbReference>
<accession>Q8NEB7</accession>
<accession>Q9BY87</accession>
<reference evidence="7 9" key="1">
    <citation type="journal article" date="2001" name="Proc. Natl. Acad. Sci. U.S.A.">
        <title>Identification of proacrosin binding protein sp32 precursor as a human cancer/testis antigen.</title>
        <authorList>
            <person name="Ono T."/>
            <person name="Kurashige T."/>
            <person name="Harada N."/>
            <person name="Noguchi Y."/>
            <person name="Saika T."/>
            <person name="Niikawa N."/>
            <person name="Aoe M."/>
            <person name="Nakamura S."/>
            <person name="Higashi T."/>
            <person name="Hiraki A."/>
            <person name="Wada H."/>
            <person name="Kumon H."/>
            <person name="Old L.J."/>
            <person name="Nakayama E."/>
        </authorList>
    </citation>
    <scope>NUCLEOTIDE SEQUENCE [MRNA]</scope>
    <scope>TISSUE SPECIFICITY</scope>
    <source>
        <tissue evidence="9">Testis</tissue>
    </source>
</reference>
<reference evidence="8" key="2">
    <citation type="journal article" date="2004" name="Genome Res.">
        <title>The status, quality, and expansion of the NIH full-length cDNA project: the Mammalian Gene Collection (MGC).</title>
        <authorList>
            <consortium name="The MGC Project Team"/>
        </authorList>
    </citation>
    <scope>NUCLEOTIDE SEQUENCE [LARGE SCALE MRNA]</scope>
    <source>
        <tissue evidence="8">Testis</tissue>
    </source>
</reference>
<evidence type="ECO:0000250" key="1">
    <source>
        <dbReference type="UniProtKB" id="Q29016"/>
    </source>
</evidence>
<evidence type="ECO:0000250" key="2">
    <source>
        <dbReference type="UniProtKB" id="Q3V140"/>
    </source>
</evidence>
<evidence type="ECO:0000255" key="3"/>
<evidence type="ECO:0000256" key="4">
    <source>
        <dbReference type="SAM" id="MobiDB-lite"/>
    </source>
</evidence>
<evidence type="ECO:0000269" key="5">
    <source>
    </source>
</evidence>
<evidence type="ECO:0000303" key="6">
    <source>
    </source>
</evidence>
<evidence type="ECO:0000305" key="7"/>
<evidence type="ECO:0000312" key="8">
    <source>
        <dbReference type="EMBL" id="AAH33010.1"/>
    </source>
</evidence>
<evidence type="ECO:0000312" key="9">
    <source>
        <dbReference type="EMBL" id="BAB39388.1"/>
    </source>
</evidence>
<organism>
    <name type="scientific">Homo sapiens</name>
    <name type="common">Human</name>
    <dbReference type="NCBI Taxonomy" id="9606"/>
    <lineage>
        <taxon>Eukaryota</taxon>
        <taxon>Metazoa</taxon>
        <taxon>Chordata</taxon>
        <taxon>Craniata</taxon>
        <taxon>Vertebrata</taxon>
        <taxon>Euteleostomi</taxon>
        <taxon>Mammalia</taxon>
        <taxon>Eutheria</taxon>
        <taxon>Euarchontoglires</taxon>
        <taxon>Primates</taxon>
        <taxon>Haplorrhini</taxon>
        <taxon>Catarrhini</taxon>
        <taxon>Hominidae</taxon>
        <taxon>Homo</taxon>
    </lineage>
</organism>
<comment type="function">
    <molecule>Acrosin-binding protein, mature form</molecule>
    <text evidence="2">Acrosomal protein that maintains proacrosin (pro-ACR) as an enzymatically inactive zymogen in the acrosome. Involved also in the acrosome formation.</text>
</comment>
<comment type="subunit">
    <molecule>Acrosin-binding protein, mature form</molecule>
    <text evidence="1">Binds proacrosin (pro-ACR). Does not bind the mature form of ACR.</text>
</comment>
<comment type="subcellular location">
    <subcellularLocation>
        <location evidence="1">Secreted</location>
    </subcellularLocation>
    <subcellularLocation>
        <location evidence="1 2">Cytoplasmic vesicle</location>
        <location evidence="1 2">Secretory vesicle</location>
        <location evidence="1 2">Acrosome</location>
    </subcellularLocation>
</comment>
<comment type="tissue specificity">
    <text evidence="5">Expression restricted to testis in normal tissue. Expressed in a wide spectrum of cancers, including bladder, breast, liver, lung and colon cancers.</text>
</comment>
<comment type="PTM">
    <text evidence="1">Phosphorylated on Tyr residues in capacitated sperm.</text>
</comment>
<comment type="PTM">
    <text evidence="1">The N-terminus is blocked.</text>
</comment>
<comment type="PTM">
    <text evidence="1">Synthesized as a 60-kDa precursor, the 32-kDa mature form is post-translationally produced by the removal of the N-terminal half of the precursor during sperm maturation in the testis and/or epididymis.</text>
</comment>
<keyword id="KW-0968">Cytoplasmic vesicle</keyword>
<keyword id="KW-0597">Phosphoprotein</keyword>
<keyword id="KW-1267">Proteomics identification</keyword>
<keyword id="KW-1185">Reference proteome</keyword>
<keyword id="KW-0964">Secreted</keyword>
<keyword id="KW-0732">Signal</keyword>
<protein>
    <recommendedName>
        <fullName>Acrosin-binding protein</fullName>
    </recommendedName>
    <alternativeName>
        <fullName>Acrosin-binding protein, 60 kDa form</fullName>
    </alternativeName>
    <alternativeName>
        <fullName>Cancer/testis antigen 23</fullName>
        <shortName>CT23</shortName>
    </alternativeName>
    <alternativeName>
        <fullName evidence="6">Cancer/testis antigen OY-TES-1</fullName>
    </alternativeName>
    <alternativeName>
        <fullName>Proacrosin-binding protein sp32</fullName>
    </alternativeName>
    <component>
        <recommendedName>
            <fullName>Acrosin-binding protein, mature form</fullName>
        </recommendedName>
        <alternativeName>
            <fullName>Acrosin-binding protein, 32 kDa form, mature form</fullName>
        </alternativeName>
    </component>
</protein>
<feature type="signal peptide" evidence="3">
    <location>
        <begin position="1"/>
        <end position="25"/>
    </location>
</feature>
<feature type="chain" id="PRO_0000227516" description="Acrosin-binding protein">
    <location>
        <begin position="26"/>
        <end position="543"/>
    </location>
</feature>
<feature type="propeptide" id="PRO_0000449367" description="Removed in mature form" evidence="1">
    <location>
        <begin position="26"/>
        <end position="273"/>
    </location>
</feature>
<feature type="chain" id="PRO_0000449368" description="Acrosin-binding protein, mature form">
    <location>
        <begin position="274"/>
        <end position="543"/>
    </location>
</feature>
<feature type="region of interest" description="Pro-ACR binding" evidence="2">
    <location>
        <begin position="26"/>
        <end position="106"/>
    </location>
</feature>
<feature type="region of interest" description="Disordered" evidence="4">
    <location>
        <begin position="185"/>
        <end position="272"/>
    </location>
</feature>
<feature type="region of interest" description="Pro-ACR binding" evidence="2">
    <location>
        <begin position="319"/>
        <end position="427"/>
    </location>
</feature>
<feature type="compositionally biased region" description="Basic and acidic residues" evidence="4">
    <location>
        <begin position="192"/>
        <end position="220"/>
    </location>
</feature>
<feature type="compositionally biased region" description="Acidic residues" evidence="4">
    <location>
        <begin position="221"/>
        <end position="231"/>
    </location>
</feature>
<feature type="compositionally biased region" description="Basic and acidic residues" evidence="4">
    <location>
        <begin position="232"/>
        <end position="243"/>
    </location>
</feature>
<feature type="sequence variant" id="VAR_050633" description="In dbSNP:rs3741923.">
    <original>T</original>
    <variation>A</variation>
    <location>
        <position position="336"/>
    </location>
</feature>
<feature type="sequence conflict" description="In Ref. 1; BAB39388." evidence="7" ref="1">
    <original>S</original>
    <variation>P</variation>
    <location>
        <position position="32"/>
    </location>
</feature>
<feature type="sequence conflict" description="In Ref. 1; BAB39388." evidence="7" ref="1">
    <original>L</original>
    <variation>F</variation>
    <location>
        <position position="316"/>
    </location>
</feature>